<keyword id="KW-0929">Antimicrobial</keyword>
<keyword id="KW-0052">Apoplast</keyword>
<keyword id="KW-1015">Disulfide bond</keyword>
<keyword id="KW-0295">Fungicide</keyword>
<keyword id="KW-0964">Secreted</keyword>
<keyword id="KW-0732">Signal</keyword>
<dbReference type="EMBL" id="AJ242828">
    <property type="protein sequence ID" value="CAB62167.1"/>
    <property type="molecule type" value="mRNA"/>
</dbReference>
<dbReference type="SMR" id="Q9SMH2"/>
<dbReference type="Allergome" id="10208">
    <property type="allergen name" value="Cas s TLP"/>
</dbReference>
<dbReference type="GO" id="GO:0048046">
    <property type="term" value="C:apoplast"/>
    <property type="evidence" value="ECO:0007669"/>
    <property type="project" value="UniProtKB-SubCell"/>
</dbReference>
<dbReference type="GO" id="GO:0050832">
    <property type="term" value="P:defense response to fungus"/>
    <property type="evidence" value="ECO:0007669"/>
    <property type="project" value="UniProtKB-KW"/>
</dbReference>
<dbReference type="GO" id="GO:0031640">
    <property type="term" value="P:killing of cells of another organism"/>
    <property type="evidence" value="ECO:0007669"/>
    <property type="project" value="UniProtKB-KW"/>
</dbReference>
<dbReference type="CDD" id="cd09218">
    <property type="entry name" value="TLP-PA"/>
    <property type="match status" value="1"/>
</dbReference>
<dbReference type="FunFam" id="2.60.110.10:FF:000002">
    <property type="entry name" value="Thaumatin-like protein 1a"/>
    <property type="match status" value="1"/>
</dbReference>
<dbReference type="Gene3D" id="2.60.110.10">
    <property type="entry name" value="Thaumatin"/>
    <property type="match status" value="1"/>
</dbReference>
<dbReference type="InterPro" id="IPR037176">
    <property type="entry name" value="Osmotin/thaumatin-like_sf"/>
</dbReference>
<dbReference type="InterPro" id="IPR001938">
    <property type="entry name" value="Thaumatin"/>
</dbReference>
<dbReference type="InterPro" id="IPR017949">
    <property type="entry name" value="Thaumatin_CS"/>
</dbReference>
<dbReference type="PANTHER" id="PTHR31048">
    <property type="entry name" value="OS03G0233200 PROTEIN"/>
    <property type="match status" value="1"/>
</dbReference>
<dbReference type="Pfam" id="PF00314">
    <property type="entry name" value="Thaumatin"/>
    <property type="match status" value="1"/>
</dbReference>
<dbReference type="PIRSF" id="PIRSF002703">
    <property type="entry name" value="Thaumatin"/>
    <property type="match status" value="1"/>
</dbReference>
<dbReference type="PRINTS" id="PR00347">
    <property type="entry name" value="THAUMATIN"/>
</dbReference>
<dbReference type="SMART" id="SM00205">
    <property type="entry name" value="THN"/>
    <property type="match status" value="1"/>
</dbReference>
<dbReference type="SUPFAM" id="SSF49870">
    <property type="entry name" value="Osmotin, thaumatin-like protein"/>
    <property type="match status" value="1"/>
</dbReference>
<dbReference type="PROSITE" id="PS00316">
    <property type="entry name" value="THAUMATIN_1"/>
    <property type="match status" value="1"/>
</dbReference>
<dbReference type="PROSITE" id="PS51367">
    <property type="entry name" value="THAUMATIN_2"/>
    <property type="match status" value="1"/>
</dbReference>
<gene>
    <name type="primary">TL1</name>
</gene>
<evidence type="ECO:0000250" key="1"/>
<evidence type="ECO:0000255" key="2"/>
<evidence type="ECO:0000255" key="3">
    <source>
        <dbReference type="PROSITE-ProRule" id="PRU00699"/>
    </source>
</evidence>
<evidence type="ECO:0000305" key="4"/>
<evidence type="ECO:0000312" key="5">
    <source>
        <dbReference type="EMBL" id="CAB62167.1"/>
    </source>
</evidence>
<accession>Q9SMH2</accession>
<reference evidence="4" key="1">
    <citation type="submission" date="1999-06" db="EMBL/GenBank/DDBJ databases">
        <title>An apoplastic basic thaumatin-like protein from recalcitrant chestnut seeds with antifungal properties.</title>
        <authorList>
            <person name="Garcia-Casado G."/>
            <person name="Gomez L."/>
            <person name="Aragoncillo C."/>
        </authorList>
    </citation>
    <scope>NUCLEOTIDE SEQUENCE [MRNA]</scope>
    <source>
        <tissue>Cotyledon</tissue>
    </source>
</reference>
<feature type="signal peptide" evidence="2">
    <location>
        <begin position="1"/>
        <end position="22"/>
    </location>
</feature>
<feature type="chain" id="PRO_0000034019" description="Thaumatin-like protein 1">
    <location>
        <begin position="23"/>
        <end position="243"/>
    </location>
</feature>
<feature type="disulfide bond" evidence="3">
    <location>
        <begin position="31"/>
        <end position="242"/>
    </location>
</feature>
<feature type="disulfide bond" evidence="3">
    <location>
        <begin position="79"/>
        <end position="88"/>
    </location>
</feature>
<feature type="disulfide bond" evidence="3">
    <location>
        <begin position="93"/>
        <end position="100"/>
    </location>
</feature>
<feature type="disulfide bond" evidence="3">
    <location>
        <begin position="148"/>
        <end position="231"/>
    </location>
</feature>
<feature type="disulfide bond" evidence="3">
    <location>
        <begin position="153"/>
        <end position="214"/>
    </location>
</feature>
<feature type="disulfide bond" evidence="3">
    <location>
        <begin position="161"/>
        <end position="177"/>
    </location>
</feature>
<feature type="disulfide bond" evidence="3">
    <location>
        <begin position="181"/>
        <end position="190"/>
    </location>
</feature>
<feature type="disulfide bond" evidence="3">
    <location>
        <begin position="191"/>
        <end position="201"/>
    </location>
</feature>
<protein>
    <recommendedName>
        <fullName>Thaumatin-like protein 1</fullName>
    </recommendedName>
</protein>
<proteinExistence type="evidence at transcript level"/>
<sequence>MMKTLALYGLTLALFFLSGAHSAKITFTNNCPRTIWPGTLTSDQKPQLPNTGFVLASKASLTLGVQAPWKGRFWARTRCTTNSGKFTCETADCSTGQVACNGNGAIPPASLVEINIAANRGMDFYDVSLVDGYNLPVSVATRGGTGDCKATSCRANVNAVCPAELQVKGSDASVLACKSACTAFNQPQYCCTGAFDTARTCPATKYSRIFKQQCPQAYSYAYDDSTSTFTCSGAPDYVITFCP</sequence>
<name>TLP1_CASSA</name>
<comment type="function">
    <text evidence="1">Possesses antifungal activity.</text>
</comment>
<comment type="subcellular location">
    <subcellularLocation>
        <location evidence="4">Secreted</location>
        <location evidence="4">Extracellular space</location>
        <location evidence="4">Apoplast</location>
    </subcellularLocation>
</comment>
<comment type="similarity">
    <text evidence="3">Belongs to the thaumatin family.</text>
</comment>
<organism evidence="5">
    <name type="scientific">Castanea sativa</name>
    <name type="common">Sweet chestnut</name>
    <dbReference type="NCBI Taxonomy" id="21020"/>
    <lineage>
        <taxon>Eukaryota</taxon>
        <taxon>Viridiplantae</taxon>
        <taxon>Streptophyta</taxon>
        <taxon>Embryophyta</taxon>
        <taxon>Tracheophyta</taxon>
        <taxon>Spermatophyta</taxon>
        <taxon>Magnoliopsida</taxon>
        <taxon>eudicotyledons</taxon>
        <taxon>Gunneridae</taxon>
        <taxon>Pentapetalae</taxon>
        <taxon>rosids</taxon>
        <taxon>fabids</taxon>
        <taxon>Fagales</taxon>
        <taxon>Fagaceae</taxon>
        <taxon>Castanea</taxon>
    </lineage>
</organism>